<gene>
    <name evidence="1" type="primary">uxaB</name>
    <name type="ordered locus">E2348C_1642</name>
</gene>
<sequence>MKTLNRRDFPGAQYPERIIQFGEGNFLRAFVDWQIDLLNEHTDLNSGVVVVRPIETSFPPSLSTQDGLYTTIIRGLNEKGEAVSDARLIRSVNREISVYSEYDEFLKLAHNPEMRFVFSNTTEAGISYHAGDKFDDAPAVSYPAKLTRLLFERFSHFNGALDKGWIIIPCELIDYNGDALRELVLRYAQEWALPEAFIQWLDQANSFCSTLVDRIVTGYPRDEVAKLEEELGYHDGFLDTAEHFYLFVIQGPKSLATELRLDKYPLNVLIVDDIKPYKERKVAILNGAHTALVPVAFQAGLDTVGEAMNDAEICAFVEKAIYEEIIPVLDLPRDELESFASAVTGRFRNPYIKHQLLSIALNGMTKFRTRILPQLLAGQKANGTLPARLTFALAALIAFYRGERNGETYPVQDDAHWLERYQQLWSQYRDRVIGTQELVAIVLAEKDHWEQDLTQVPGLVEQVANDLDAILEKGMREAVRPLC</sequence>
<comment type="catalytic activity">
    <reaction evidence="1">
        <text>D-altronate + NAD(+) = keto-D-tagaturonate + NADH + H(+)</text>
        <dbReference type="Rhea" id="RHEA:17813"/>
        <dbReference type="ChEBI" id="CHEBI:15378"/>
        <dbReference type="ChEBI" id="CHEBI:17360"/>
        <dbReference type="ChEBI" id="CHEBI:17886"/>
        <dbReference type="ChEBI" id="CHEBI:57540"/>
        <dbReference type="ChEBI" id="CHEBI:57945"/>
        <dbReference type="EC" id="1.1.1.58"/>
    </reaction>
</comment>
<comment type="pathway">
    <text evidence="1">Carbohydrate metabolism; pentose and glucuronate interconversion.</text>
</comment>
<comment type="similarity">
    <text evidence="1">Belongs to the mannitol dehydrogenase family. UxaB subfamily.</text>
</comment>
<dbReference type="EC" id="1.1.1.58" evidence="1"/>
<dbReference type="EMBL" id="FM180568">
    <property type="protein sequence ID" value="CAS09190.1"/>
    <property type="molecule type" value="Genomic_DNA"/>
</dbReference>
<dbReference type="RefSeq" id="WP_000854637.1">
    <property type="nucleotide sequence ID" value="NC_011601.1"/>
</dbReference>
<dbReference type="SMR" id="B7URP8"/>
<dbReference type="KEGG" id="ecg:E2348C_1642"/>
<dbReference type="HOGENOM" id="CLU_027324_1_0_6"/>
<dbReference type="UniPathway" id="UPA00246"/>
<dbReference type="Proteomes" id="UP000008205">
    <property type="component" value="Chromosome"/>
</dbReference>
<dbReference type="GO" id="GO:0005829">
    <property type="term" value="C:cytosol"/>
    <property type="evidence" value="ECO:0007669"/>
    <property type="project" value="TreeGrafter"/>
</dbReference>
<dbReference type="GO" id="GO:0008926">
    <property type="term" value="F:mannitol-1-phosphate 5-dehydrogenase activity"/>
    <property type="evidence" value="ECO:0007669"/>
    <property type="project" value="TreeGrafter"/>
</dbReference>
<dbReference type="GO" id="GO:0009026">
    <property type="term" value="F:tagaturonate reductase activity"/>
    <property type="evidence" value="ECO:0007669"/>
    <property type="project" value="UniProtKB-UniRule"/>
</dbReference>
<dbReference type="GO" id="GO:0019698">
    <property type="term" value="P:D-galacturonate catabolic process"/>
    <property type="evidence" value="ECO:0007669"/>
    <property type="project" value="TreeGrafter"/>
</dbReference>
<dbReference type="GO" id="GO:0019592">
    <property type="term" value="P:mannitol catabolic process"/>
    <property type="evidence" value="ECO:0007669"/>
    <property type="project" value="TreeGrafter"/>
</dbReference>
<dbReference type="FunFam" id="1.10.1040.10:FF:000018">
    <property type="entry name" value="Altronate oxidoreductase"/>
    <property type="match status" value="1"/>
</dbReference>
<dbReference type="FunFam" id="3.40.50.720:FF:000153">
    <property type="entry name" value="Altronate oxidoreductase"/>
    <property type="match status" value="1"/>
</dbReference>
<dbReference type="Gene3D" id="1.10.1040.10">
    <property type="entry name" value="N-(1-d-carboxylethyl)-l-norvaline Dehydrogenase, domain 2"/>
    <property type="match status" value="1"/>
</dbReference>
<dbReference type="Gene3D" id="3.40.50.720">
    <property type="entry name" value="NAD(P)-binding Rossmann-like Domain"/>
    <property type="match status" value="1"/>
</dbReference>
<dbReference type="HAMAP" id="MF_00670">
    <property type="entry name" value="Altron_oxidoreduct"/>
    <property type="match status" value="1"/>
</dbReference>
<dbReference type="InterPro" id="IPR008927">
    <property type="entry name" value="6-PGluconate_DH-like_C_sf"/>
</dbReference>
<dbReference type="InterPro" id="IPR013328">
    <property type="entry name" value="6PGD_dom2"/>
</dbReference>
<dbReference type="InterPro" id="IPR023668">
    <property type="entry name" value="Altronate_OxRdtase"/>
</dbReference>
<dbReference type="InterPro" id="IPR013118">
    <property type="entry name" value="Mannitol_DH_C"/>
</dbReference>
<dbReference type="InterPro" id="IPR013131">
    <property type="entry name" value="Mannitol_DH_N"/>
</dbReference>
<dbReference type="InterPro" id="IPR036291">
    <property type="entry name" value="NAD(P)-bd_dom_sf"/>
</dbReference>
<dbReference type="NCBIfam" id="NF002969">
    <property type="entry name" value="PRK03643.1"/>
    <property type="match status" value="1"/>
</dbReference>
<dbReference type="PANTHER" id="PTHR30524:SF0">
    <property type="entry name" value="ALTRONATE OXIDOREDUCTASE-RELATED"/>
    <property type="match status" value="1"/>
</dbReference>
<dbReference type="PANTHER" id="PTHR30524">
    <property type="entry name" value="MANNITOL-1-PHOSPHATE 5-DEHYDROGENASE"/>
    <property type="match status" value="1"/>
</dbReference>
<dbReference type="Pfam" id="PF01232">
    <property type="entry name" value="Mannitol_dh"/>
    <property type="match status" value="1"/>
</dbReference>
<dbReference type="Pfam" id="PF08125">
    <property type="entry name" value="Mannitol_dh_C"/>
    <property type="match status" value="1"/>
</dbReference>
<dbReference type="SUPFAM" id="SSF48179">
    <property type="entry name" value="6-phosphogluconate dehydrogenase C-terminal domain-like"/>
    <property type="match status" value="1"/>
</dbReference>
<dbReference type="SUPFAM" id="SSF51735">
    <property type="entry name" value="NAD(P)-binding Rossmann-fold domains"/>
    <property type="match status" value="1"/>
</dbReference>
<feature type="chain" id="PRO_1000147657" description="Altronate oxidoreductase">
    <location>
        <begin position="1"/>
        <end position="483"/>
    </location>
</feature>
<feature type="binding site" evidence="1">
    <location>
        <begin position="18"/>
        <end position="29"/>
    </location>
    <ligand>
        <name>NAD(+)</name>
        <dbReference type="ChEBI" id="CHEBI:57540"/>
    </ligand>
</feature>
<accession>B7URP8</accession>
<organism>
    <name type="scientific">Escherichia coli O127:H6 (strain E2348/69 / EPEC)</name>
    <dbReference type="NCBI Taxonomy" id="574521"/>
    <lineage>
        <taxon>Bacteria</taxon>
        <taxon>Pseudomonadati</taxon>
        <taxon>Pseudomonadota</taxon>
        <taxon>Gammaproteobacteria</taxon>
        <taxon>Enterobacterales</taxon>
        <taxon>Enterobacteriaceae</taxon>
        <taxon>Escherichia</taxon>
    </lineage>
</organism>
<keyword id="KW-0520">NAD</keyword>
<keyword id="KW-0560">Oxidoreductase</keyword>
<keyword id="KW-1185">Reference proteome</keyword>
<reference key="1">
    <citation type="journal article" date="2009" name="J. Bacteriol.">
        <title>Complete genome sequence and comparative genome analysis of enteropathogenic Escherichia coli O127:H6 strain E2348/69.</title>
        <authorList>
            <person name="Iguchi A."/>
            <person name="Thomson N.R."/>
            <person name="Ogura Y."/>
            <person name="Saunders D."/>
            <person name="Ooka T."/>
            <person name="Henderson I.R."/>
            <person name="Harris D."/>
            <person name="Asadulghani M."/>
            <person name="Kurokawa K."/>
            <person name="Dean P."/>
            <person name="Kenny B."/>
            <person name="Quail M.A."/>
            <person name="Thurston S."/>
            <person name="Dougan G."/>
            <person name="Hayashi T."/>
            <person name="Parkhill J."/>
            <person name="Frankel G."/>
        </authorList>
    </citation>
    <scope>NUCLEOTIDE SEQUENCE [LARGE SCALE GENOMIC DNA]</scope>
    <source>
        <strain>E2348/69 / EPEC</strain>
    </source>
</reference>
<evidence type="ECO:0000255" key="1">
    <source>
        <dbReference type="HAMAP-Rule" id="MF_00670"/>
    </source>
</evidence>
<protein>
    <recommendedName>
        <fullName evidence="1">Altronate oxidoreductase</fullName>
        <ecNumber evidence="1">1.1.1.58</ecNumber>
    </recommendedName>
    <alternativeName>
        <fullName evidence="1">Tagaturonate dehydrogenase</fullName>
    </alternativeName>
    <alternativeName>
        <fullName evidence="1">Tagaturonate reductase</fullName>
    </alternativeName>
</protein>
<proteinExistence type="inferred from homology"/>
<name>UXAB_ECO27</name>